<comment type="function">
    <text evidence="1">Together with its co-chaperonin GroES, plays an essential role in assisting protein folding. The GroEL-GroES system forms a nano-cage that allows encapsulation of the non-native substrate proteins and provides a physical environment optimized to promote and accelerate protein folding.</text>
</comment>
<comment type="catalytic activity">
    <reaction evidence="1">
        <text>ATP + H2O + a folded polypeptide = ADP + phosphate + an unfolded polypeptide.</text>
        <dbReference type="EC" id="5.6.1.7"/>
    </reaction>
</comment>
<comment type="subunit">
    <text evidence="1">Forms a cylinder of 14 subunits composed of two heptameric rings stacked back-to-back. Interacts with the co-chaperonin GroES.</text>
</comment>
<comment type="subcellular location">
    <subcellularLocation>
        <location evidence="1">Cytoplasm</location>
    </subcellularLocation>
</comment>
<comment type="similarity">
    <text evidence="1">Belongs to the chaperonin (HSP60) family.</text>
</comment>
<dbReference type="EC" id="5.6.1.7" evidence="1"/>
<dbReference type="EMBL" id="AM180355">
    <property type="protein sequence ID" value="CAJ67016.1"/>
    <property type="molecule type" value="Genomic_DNA"/>
</dbReference>
<dbReference type="RefSeq" id="WP_003435012.1">
    <property type="nucleotide sequence ID" value="NZ_JAUPES010000004.1"/>
</dbReference>
<dbReference type="RefSeq" id="YP_001086664.1">
    <property type="nucleotide sequence ID" value="NC_009089.1"/>
</dbReference>
<dbReference type="SMR" id="Q18CT5"/>
<dbReference type="STRING" id="272563.CD630_01940"/>
<dbReference type="EnsemblBacteria" id="CAJ67016">
    <property type="protein sequence ID" value="CAJ67016"/>
    <property type="gene ID" value="CD630_01940"/>
</dbReference>
<dbReference type="KEGG" id="cdf:CD630_01940"/>
<dbReference type="KEGG" id="pdc:CDIF630_00315"/>
<dbReference type="PATRIC" id="fig|272563.120.peg.209"/>
<dbReference type="eggNOG" id="COG0459">
    <property type="taxonomic scope" value="Bacteria"/>
</dbReference>
<dbReference type="OrthoDB" id="9766614at2"/>
<dbReference type="PhylomeDB" id="Q18CT5"/>
<dbReference type="BioCyc" id="PDIF272563:G12WB-299-MONOMER"/>
<dbReference type="Proteomes" id="UP000001978">
    <property type="component" value="Chromosome"/>
</dbReference>
<dbReference type="GO" id="GO:0005737">
    <property type="term" value="C:cytoplasm"/>
    <property type="evidence" value="ECO:0007669"/>
    <property type="project" value="UniProtKB-SubCell"/>
</dbReference>
<dbReference type="GO" id="GO:0005524">
    <property type="term" value="F:ATP binding"/>
    <property type="evidence" value="ECO:0007669"/>
    <property type="project" value="UniProtKB-UniRule"/>
</dbReference>
<dbReference type="GO" id="GO:0140662">
    <property type="term" value="F:ATP-dependent protein folding chaperone"/>
    <property type="evidence" value="ECO:0007669"/>
    <property type="project" value="InterPro"/>
</dbReference>
<dbReference type="GO" id="GO:0016853">
    <property type="term" value="F:isomerase activity"/>
    <property type="evidence" value="ECO:0007669"/>
    <property type="project" value="UniProtKB-KW"/>
</dbReference>
<dbReference type="GO" id="GO:0051082">
    <property type="term" value="F:unfolded protein binding"/>
    <property type="evidence" value="ECO:0007669"/>
    <property type="project" value="UniProtKB-UniRule"/>
</dbReference>
<dbReference type="GO" id="GO:0042026">
    <property type="term" value="P:protein refolding"/>
    <property type="evidence" value="ECO:0007669"/>
    <property type="project" value="UniProtKB-UniRule"/>
</dbReference>
<dbReference type="CDD" id="cd03344">
    <property type="entry name" value="GroEL"/>
    <property type="match status" value="1"/>
</dbReference>
<dbReference type="FunFam" id="1.10.560.10:FF:000001">
    <property type="entry name" value="60 kDa chaperonin"/>
    <property type="match status" value="1"/>
</dbReference>
<dbReference type="FunFam" id="3.50.7.10:FF:000001">
    <property type="entry name" value="60 kDa chaperonin"/>
    <property type="match status" value="1"/>
</dbReference>
<dbReference type="Gene3D" id="3.50.7.10">
    <property type="entry name" value="GroEL"/>
    <property type="match status" value="1"/>
</dbReference>
<dbReference type="Gene3D" id="1.10.560.10">
    <property type="entry name" value="GroEL-like equatorial domain"/>
    <property type="match status" value="1"/>
</dbReference>
<dbReference type="Gene3D" id="3.30.260.10">
    <property type="entry name" value="TCP-1-like chaperonin intermediate domain"/>
    <property type="match status" value="1"/>
</dbReference>
<dbReference type="HAMAP" id="MF_00600">
    <property type="entry name" value="CH60"/>
    <property type="match status" value="1"/>
</dbReference>
<dbReference type="InterPro" id="IPR018370">
    <property type="entry name" value="Chaperonin_Cpn60_CS"/>
</dbReference>
<dbReference type="InterPro" id="IPR001844">
    <property type="entry name" value="Cpn60/GroEL"/>
</dbReference>
<dbReference type="InterPro" id="IPR002423">
    <property type="entry name" value="Cpn60/GroEL/TCP-1"/>
</dbReference>
<dbReference type="InterPro" id="IPR027409">
    <property type="entry name" value="GroEL-like_apical_dom_sf"/>
</dbReference>
<dbReference type="InterPro" id="IPR027413">
    <property type="entry name" value="GROEL-like_equatorial_sf"/>
</dbReference>
<dbReference type="InterPro" id="IPR027410">
    <property type="entry name" value="TCP-1-like_intermed_sf"/>
</dbReference>
<dbReference type="NCBIfam" id="TIGR02348">
    <property type="entry name" value="GroEL"/>
    <property type="match status" value="1"/>
</dbReference>
<dbReference type="NCBIfam" id="NF000592">
    <property type="entry name" value="PRK00013.1"/>
    <property type="match status" value="1"/>
</dbReference>
<dbReference type="NCBIfam" id="NF009487">
    <property type="entry name" value="PRK12849.1"/>
    <property type="match status" value="1"/>
</dbReference>
<dbReference type="NCBIfam" id="NF009488">
    <property type="entry name" value="PRK12850.1"/>
    <property type="match status" value="1"/>
</dbReference>
<dbReference type="NCBIfam" id="NF009489">
    <property type="entry name" value="PRK12851.1"/>
    <property type="match status" value="1"/>
</dbReference>
<dbReference type="PANTHER" id="PTHR45633">
    <property type="entry name" value="60 KDA HEAT SHOCK PROTEIN, MITOCHONDRIAL"/>
    <property type="match status" value="1"/>
</dbReference>
<dbReference type="Pfam" id="PF00118">
    <property type="entry name" value="Cpn60_TCP1"/>
    <property type="match status" value="1"/>
</dbReference>
<dbReference type="PRINTS" id="PR00298">
    <property type="entry name" value="CHAPERONIN60"/>
</dbReference>
<dbReference type="SUPFAM" id="SSF52029">
    <property type="entry name" value="GroEL apical domain-like"/>
    <property type="match status" value="1"/>
</dbReference>
<dbReference type="SUPFAM" id="SSF48592">
    <property type="entry name" value="GroEL equatorial domain-like"/>
    <property type="match status" value="1"/>
</dbReference>
<dbReference type="SUPFAM" id="SSF54849">
    <property type="entry name" value="GroEL-intermediate domain like"/>
    <property type="match status" value="1"/>
</dbReference>
<dbReference type="PROSITE" id="PS00296">
    <property type="entry name" value="CHAPERONINS_CPN60"/>
    <property type="match status" value="1"/>
</dbReference>
<feature type="chain" id="PRO_0000256895" description="Chaperonin GroEL">
    <location>
        <begin position="1"/>
        <end position="542"/>
    </location>
</feature>
<feature type="binding site" evidence="1">
    <location>
        <begin position="29"/>
        <end position="32"/>
    </location>
    <ligand>
        <name>ATP</name>
        <dbReference type="ChEBI" id="CHEBI:30616"/>
    </ligand>
</feature>
<feature type="binding site" evidence="1">
    <location>
        <begin position="86"/>
        <end position="90"/>
    </location>
    <ligand>
        <name>ATP</name>
        <dbReference type="ChEBI" id="CHEBI:30616"/>
    </ligand>
</feature>
<feature type="binding site" evidence="1">
    <location>
        <position position="413"/>
    </location>
    <ligand>
        <name>ATP</name>
        <dbReference type="ChEBI" id="CHEBI:30616"/>
    </ligand>
</feature>
<feature type="binding site" evidence="1">
    <location>
        <begin position="478"/>
        <end position="480"/>
    </location>
    <ligand>
        <name>ATP</name>
        <dbReference type="ChEBI" id="CHEBI:30616"/>
    </ligand>
</feature>
<feature type="binding site" evidence="1">
    <location>
        <position position="494"/>
    </location>
    <ligand>
        <name>ATP</name>
        <dbReference type="ChEBI" id="CHEBI:30616"/>
    </ligand>
</feature>
<sequence>MAKEIKFSEETRRALEAGVNKLADTVKVTLGPKGRNVILDKKFGSPLITNDGVTIAKEIELEDRFENMGAQLVKEVATKTNDVAGDGTTTATVLAQAIIREGLKNVTAGANPILLRKGIQKAVTVAVEELKNQSRIVETQEAISQVASISAGDEEVGKLIAEAMEIVGKDGVITVEESQTMNTELDAVEGMQFDRGFVSAYMVTDVDKMEAVLNDPYILITDKKISNIQELLPVLEQIVQQGKKLLIIAEDVEGEALSTLVVNKLRGTFDVVAVKAPGFGDRRKEMLQDIAILTGAQVISEELGYDLKEADLSMLGRASSVKVTKESTTIVDGSGDKKAIEDRVTQIKHQVEQTTSDFDREKLMERLAKLAGGVAVVKVGAATEVELKERKLRIEDALNATRAAVEEGIVAGGGTAFVSVIPAIGTLIESLEGEVKLGAQIVKKALEEPLRQIAINAGLEGAVIVQNVVNSEAETGFDALNEKYVNMIEAGIVDPTKVSRSALQNAASIASTFLTTEAAVADLPEKEDAGMPGMGGGMPGMM</sequence>
<gene>
    <name evidence="1" type="primary">groEL</name>
    <name evidence="1" type="synonym">groL</name>
    <name type="ordered locus">CD630_01940</name>
</gene>
<keyword id="KW-0067">ATP-binding</keyword>
<keyword id="KW-0143">Chaperone</keyword>
<keyword id="KW-0963">Cytoplasm</keyword>
<keyword id="KW-0413">Isomerase</keyword>
<keyword id="KW-0547">Nucleotide-binding</keyword>
<keyword id="KW-1185">Reference proteome</keyword>
<organism>
    <name type="scientific">Clostridioides difficile (strain 630)</name>
    <name type="common">Peptoclostridium difficile</name>
    <dbReference type="NCBI Taxonomy" id="272563"/>
    <lineage>
        <taxon>Bacteria</taxon>
        <taxon>Bacillati</taxon>
        <taxon>Bacillota</taxon>
        <taxon>Clostridia</taxon>
        <taxon>Peptostreptococcales</taxon>
        <taxon>Peptostreptococcaceae</taxon>
        <taxon>Clostridioides</taxon>
    </lineage>
</organism>
<name>CH60_CLOD6</name>
<protein>
    <recommendedName>
        <fullName evidence="1">Chaperonin GroEL</fullName>
        <ecNumber evidence="1">5.6.1.7</ecNumber>
    </recommendedName>
    <alternativeName>
        <fullName evidence="1">60 kDa chaperonin</fullName>
    </alternativeName>
    <alternativeName>
        <fullName evidence="1">Chaperonin-60</fullName>
        <shortName evidence="1">Cpn60</shortName>
    </alternativeName>
</protein>
<reference key="1">
    <citation type="journal article" date="2006" name="Nat. Genet.">
        <title>The multidrug-resistant human pathogen Clostridium difficile has a highly mobile, mosaic genome.</title>
        <authorList>
            <person name="Sebaihia M."/>
            <person name="Wren B.W."/>
            <person name="Mullany P."/>
            <person name="Fairweather N.F."/>
            <person name="Minton N."/>
            <person name="Stabler R."/>
            <person name="Thomson N.R."/>
            <person name="Roberts A.P."/>
            <person name="Cerdeno-Tarraga A.M."/>
            <person name="Wang H."/>
            <person name="Holden M.T.G."/>
            <person name="Wright A."/>
            <person name="Churcher C."/>
            <person name="Quail M.A."/>
            <person name="Baker S."/>
            <person name="Bason N."/>
            <person name="Brooks K."/>
            <person name="Chillingworth T."/>
            <person name="Cronin A."/>
            <person name="Davis P."/>
            <person name="Dowd L."/>
            <person name="Fraser A."/>
            <person name="Feltwell T."/>
            <person name="Hance Z."/>
            <person name="Holroyd S."/>
            <person name="Jagels K."/>
            <person name="Moule S."/>
            <person name="Mungall K."/>
            <person name="Price C."/>
            <person name="Rabbinowitsch E."/>
            <person name="Sharp S."/>
            <person name="Simmonds M."/>
            <person name="Stevens K."/>
            <person name="Unwin L."/>
            <person name="Whithead S."/>
            <person name="Dupuy B."/>
            <person name="Dougan G."/>
            <person name="Barrell B."/>
            <person name="Parkhill J."/>
        </authorList>
    </citation>
    <scope>NUCLEOTIDE SEQUENCE [LARGE SCALE GENOMIC DNA]</scope>
    <source>
        <strain>630</strain>
    </source>
</reference>
<evidence type="ECO:0000255" key="1">
    <source>
        <dbReference type="HAMAP-Rule" id="MF_00600"/>
    </source>
</evidence>
<proteinExistence type="inferred from homology"/>
<accession>Q18CT5</accession>